<reference key="1">
    <citation type="journal article" date="1992" name="Proc. Natl. Acad. Sci. U.S.A.">
        <title>Molecular organization of Leishmania RNA virus 1.</title>
        <authorList>
            <person name="Stuart K.D."/>
            <person name="Weeks R."/>
            <person name="Guilbride L."/>
            <person name="Myler P.J."/>
        </authorList>
    </citation>
    <scope>NUCLEOTIDE SEQUENCE [GENOMIC RNA]</scope>
</reference>
<protein>
    <recommendedName>
        <fullName>Major capsid protein</fullName>
    </recommendedName>
    <alternativeName>
        <fullName>Major coat protein</fullName>
    </alternativeName>
</protein>
<comment type="function">
    <text evidence="1">Capsid protein self-assembles to form an icosahedral capsid with a T=2 symmetry, 35 nm in diameter, and consisting of 60 capsid proteins asymmetric dimers. The capsid encapsulates the genomic dsRNA and the polymerase and remains intact following cell entry to protect the dsRNA from degradation and to prevent unfavorable antiviral responses in the host cell during all the replication cycle of the virus. Nascent transcripts are transcribed within the structural confines of the virion and are extruded into the cytoplasm (By similarity).</text>
</comment>
<comment type="function">
    <text evidence="1">Binds and removes 5' cap structures from cellular mRNA.</text>
</comment>
<comment type="subcellular location">
    <subcellularLocation>
        <location evidence="3">Virion</location>
    </subcellularLocation>
</comment>
<comment type="similarity">
    <text evidence="3">Belongs to the totivirus major capsid protein family.</text>
</comment>
<feature type="chain" id="PRO_0000404515" description="Major capsid protein">
    <location>
        <begin position="1"/>
        <end position="741"/>
    </location>
</feature>
<feature type="region of interest" description="Disordered" evidence="2">
    <location>
        <begin position="716"/>
        <end position="741"/>
    </location>
</feature>
<organism>
    <name type="scientific">Leishmania RNA virus 1 - 1 (isolate Leishmania guyanensis)</name>
    <name type="common">LRV-1-1</name>
    <dbReference type="NCBI Taxonomy" id="58103"/>
    <lineage>
        <taxon>Viruses</taxon>
        <taxon>Riboviria</taxon>
        <taxon>Orthornavirae</taxon>
        <taxon>Duplornaviricota</taxon>
        <taxon>Chrymotiviricetes</taxon>
        <taxon>Ghabrivirales</taxon>
        <taxon>Totiviridae</taxon>
        <taxon>Leishmaniavirus</taxon>
        <taxon>Leishmania RNA virus 1</taxon>
    </lineage>
</organism>
<gene>
    <name type="primary">ORF2</name>
</gene>
<name>CAPSD_LRVLG</name>
<accession>Q02358</accession>
<sequence length="741" mass="81749">MSDTPNSDKVACGRKPMFCEIIKLANRKRLILDTTGERVYDARINYCSTADATVQADCHIYWRLKLRRTDAVFEEYTGQGYALDTASYPQQYADIIRGYYSKHVSSALAANTQHFVNVLAMLRHAGACIAHYCMTGKIDFDILSKKKHKNKEVVTLSSADSLSFLPHSALYLPSALRASDPEIFNVLYLLGCACDASIAMDNIANTSGAAKYAMPHYNPLQLSHALHVTIFYMLGLMDSCGYGEDAVLALTAGLHSVTTVIAHSDEGAITRDALRELSYTQPYGTMPVPIAGYFQHINVLFTTQPAWDQFAGIWDYVILATAALVHLSDPGMTVNDVTYPTTLTTKVASVDGRNSDIAAQMMHSATRFCDIYIENLCLFWGVVANPDGNASQALLHAFNVVACGTEPNRHLEMNVMAPWYWVESSALFSDYSQFRSPISSAGYGPQSIYGARLVLAATNSLEFTGEAGDYSAYRFEWTTMRHNPLFNILNKRVGDGLANVDFRLRPFNEWLLEGQPSRRSCDAVGHGTPTATCNHKTPNRNTVDEFIWGSTSCDLFHPAELTSYTAVCVRFRNYLSEADGDVRVLNTPTREVIEGNVVTRCDGIRCLDSNKRIQHVPEVARRYCMMARYLQARTFGALTIGDDIIRGFDKVDKVVKMHKSNNRLGQMPLIDVTGLCQPMIETSTARASMTTRIDPNRLAAATARIELPLAPRCTSSLIPSSDAVPEPEPHVGEPGNGSGCA</sequence>
<proteinExistence type="inferred from homology"/>
<evidence type="ECO:0000250" key="1"/>
<evidence type="ECO:0000256" key="2">
    <source>
        <dbReference type="SAM" id="MobiDB-lite"/>
    </source>
</evidence>
<evidence type="ECO:0000305" key="3"/>
<dbReference type="EMBL" id="M92355">
    <property type="protein sequence ID" value="AAB50023.1"/>
    <property type="molecule type" value="Genomic_RNA"/>
</dbReference>
<dbReference type="PIR" id="B46171">
    <property type="entry name" value="B46171"/>
</dbReference>
<dbReference type="RefSeq" id="NP_041190.1">
    <property type="nucleotide sequence ID" value="NC_002063.1"/>
</dbReference>
<dbReference type="SMR" id="Q02358"/>
<dbReference type="KEGG" id="vg:1446404"/>
<dbReference type="OrthoDB" id="2774at10239"/>
<dbReference type="Proteomes" id="UP000006721">
    <property type="component" value="Genome"/>
</dbReference>
<dbReference type="GO" id="GO:0039616">
    <property type="term" value="C:T=2 icosahedral viral capsid"/>
    <property type="evidence" value="ECO:0007669"/>
    <property type="project" value="UniProtKB-KW"/>
</dbReference>
<dbReference type="InterPro" id="IPR008871">
    <property type="entry name" value="Totivirus_coat"/>
</dbReference>
<dbReference type="Pfam" id="PF05518">
    <property type="entry name" value="Totivirus_coat"/>
    <property type="match status" value="1"/>
</dbReference>
<keyword id="KW-0167">Capsid protein</keyword>
<keyword id="KW-1185">Reference proteome</keyword>
<keyword id="KW-1141">T=2 icosahedral capsid protein</keyword>
<keyword id="KW-0946">Virion</keyword>
<organismHost>
    <name type="scientific">Leishmania major</name>
    <dbReference type="NCBI Taxonomy" id="5664"/>
</organismHost>